<dbReference type="EC" id="2.7.2.3" evidence="1"/>
<dbReference type="EMBL" id="CP001078">
    <property type="protein sequence ID" value="ACD51208.1"/>
    <property type="molecule type" value="Genomic_DNA"/>
</dbReference>
<dbReference type="RefSeq" id="WP_003373269.1">
    <property type="nucleotide sequence ID" value="NC_010723.1"/>
</dbReference>
<dbReference type="SMR" id="B2UY23"/>
<dbReference type="KEGG" id="cbt:CLH_2813"/>
<dbReference type="HOGENOM" id="CLU_025427_0_2_9"/>
<dbReference type="UniPathway" id="UPA00109">
    <property type="reaction ID" value="UER00185"/>
</dbReference>
<dbReference type="GO" id="GO:0005829">
    <property type="term" value="C:cytosol"/>
    <property type="evidence" value="ECO:0007669"/>
    <property type="project" value="TreeGrafter"/>
</dbReference>
<dbReference type="GO" id="GO:0043531">
    <property type="term" value="F:ADP binding"/>
    <property type="evidence" value="ECO:0007669"/>
    <property type="project" value="TreeGrafter"/>
</dbReference>
<dbReference type="GO" id="GO:0005524">
    <property type="term" value="F:ATP binding"/>
    <property type="evidence" value="ECO:0007669"/>
    <property type="project" value="UniProtKB-KW"/>
</dbReference>
<dbReference type="GO" id="GO:0004618">
    <property type="term" value="F:phosphoglycerate kinase activity"/>
    <property type="evidence" value="ECO:0007669"/>
    <property type="project" value="UniProtKB-UniRule"/>
</dbReference>
<dbReference type="GO" id="GO:0006094">
    <property type="term" value="P:gluconeogenesis"/>
    <property type="evidence" value="ECO:0007669"/>
    <property type="project" value="TreeGrafter"/>
</dbReference>
<dbReference type="GO" id="GO:0006096">
    <property type="term" value="P:glycolytic process"/>
    <property type="evidence" value="ECO:0007669"/>
    <property type="project" value="UniProtKB-UniRule"/>
</dbReference>
<dbReference type="CDD" id="cd00318">
    <property type="entry name" value="Phosphoglycerate_kinase"/>
    <property type="match status" value="1"/>
</dbReference>
<dbReference type="FunFam" id="3.40.50.1260:FF:000007">
    <property type="entry name" value="Phosphoglycerate kinase"/>
    <property type="match status" value="1"/>
</dbReference>
<dbReference type="FunFam" id="3.40.50.1260:FF:000008">
    <property type="entry name" value="Phosphoglycerate kinase"/>
    <property type="match status" value="1"/>
</dbReference>
<dbReference type="Gene3D" id="3.40.50.1260">
    <property type="entry name" value="Phosphoglycerate kinase, N-terminal domain"/>
    <property type="match status" value="2"/>
</dbReference>
<dbReference type="HAMAP" id="MF_00145">
    <property type="entry name" value="Phosphoglyc_kinase"/>
    <property type="match status" value="1"/>
</dbReference>
<dbReference type="InterPro" id="IPR001576">
    <property type="entry name" value="Phosphoglycerate_kinase"/>
</dbReference>
<dbReference type="InterPro" id="IPR015911">
    <property type="entry name" value="Phosphoglycerate_kinase_CS"/>
</dbReference>
<dbReference type="InterPro" id="IPR015824">
    <property type="entry name" value="Phosphoglycerate_kinase_N"/>
</dbReference>
<dbReference type="InterPro" id="IPR036043">
    <property type="entry name" value="Phosphoglycerate_kinase_sf"/>
</dbReference>
<dbReference type="PANTHER" id="PTHR11406">
    <property type="entry name" value="PHOSPHOGLYCERATE KINASE"/>
    <property type="match status" value="1"/>
</dbReference>
<dbReference type="PANTHER" id="PTHR11406:SF23">
    <property type="entry name" value="PHOSPHOGLYCERATE KINASE 1, CHLOROPLASTIC-RELATED"/>
    <property type="match status" value="1"/>
</dbReference>
<dbReference type="Pfam" id="PF00162">
    <property type="entry name" value="PGK"/>
    <property type="match status" value="1"/>
</dbReference>
<dbReference type="PIRSF" id="PIRSF000724">
    <property type="entry name" value="Pgk"/>
    <property type="match status" value="1"/>
</dbReference>
<dbReference type="PRINTS" id="PR00477">
    <property type="entry name" value="PHGLYCKINASE"/>
</dbReference>
<dbReference type="SUPFAM" id="SSF53748">
    <property type="entry name" value="Phosphoglycerate kinase"/>
    <property type="match status" value="1"/>
</dbReference>
<dbReference type="PROSITE" id="PS00111">
    <property type="entry name" value="PGLYCERATE_KINASE"/>
    <property type="match status" value="1"/>
</dbReference>
<accession>B2UY23</accession>
<evidence type="ECO:0000255" key="1">
    <source>
        <dbReference type="HAMAP-Rule" id="MF_00145"/>
    </source>
</evidence>
<reference key="1">
    <citation type="submission" date="2008-05" db="EMBL/GenBank/DDBJ databases">
        <title>Complete genome sequence of Clostridium botulinum E3 str. Alaska E43.</title>
        <authorList>
            <person name="Brinkac L.M."/>
            <person name="Brown J.L."/>
            <person name="Bruce D."/>
            <person name="Detter C."/>
            <person name="Munk C."/>
            <person name="Smith L.A."/>
            <person name="Smith T.J."/>
            <person name="Sutton G."/>
            <person name="Brettin T.S."/>
        </authorList>
    </citation>
    <scope>NUCLEOTIDE SEQUENCE [LARGE SCALE GENOMIC DNA]</scope>
    <source>
        <strain>Alaska E43 / Type E3</strain>
    </source>
</reference>
<protein>
    <recommendedName>
        <fullName evidence="1">Phosphoglycerate kinase</fullName>
        <ecNumber evidence="1">2.7.2.3</ecNumber>
    </recommendedName>
</protein>
<sequence>MNFNKKTIEDIQVKGKKVLVRCDFNVPLKDGVITDENRLNGALPTIKYLVENGAKVILCSHMGKPKGEPKPELSLAPVAKRLSELLGKEIKFAPDNTVVGENAKAAVAEMKDGDVVLLENTRYRKEETKNGEEFSKELASLAEIFVNDAFGTAHRAHCSTVGVTDYIDTAVCGYLIQKELKFLGNAVETPEKPFVAILGGAKVSDKIAVINNLLDKVDTIIIGGGMAYTFLKAQGYEIGTSLVEEDRLDYAKEMIAKAEEKGVNFLLPVDHRVAAEFKDVEATVTEDQNIPAGTMGLDIGPKTEKLYADAVKDAKTVIWNGPMGVFEFENFNKGTIAVAKAMADSNATTIIGGGDSAAAVNILGFGDKMTHISTGGGASLEFLEGKVLPGISALND</sequence>
<proteinExistence type="inferred from homology"/>
<feature type="chain" id="PRO_1000096330" description="Phosphoglycerate kinase">
    <location>
        <begin position="1"/>
        <end position="396"/>
    </location>
</feature>
<feature type="binding site" evidence="1">
    <location>
        <begin position="23"/>
        <end position="25"/>
    </location>
    <ligand>
        <name>substrate</name>
    </ligand>
</feature>
<feature type="binding site" evidence="1">
    <location>
        <position position="38"/>
    </location>
    <ligand>
        <name>substrate</name>
    </ligand>
</feature>
<feature type="binding site" evidence="1">
    <location>
        <begin position="61"/>
        <end position="64"/>
    </location>
    <ligand>
        <name>substrate</name>
    </ligand>
</feature>
<feature type="binding site" evidence="1">
    <location>
        <position position="122"/>
    </location>
    <ligand>
        <name>substrate</name>
    </ligand>
</feature>
<feature type="binding site" evidence="1">
    <location>
        <position position="155"/>
    </location>
    <ligand>
        <name>substrate</name>
    </ligand>
</feature>
<feature type="binding site" evidence="1">
    <location>
        <position position="206"/>
    </location>
    <ligand>
        <name>ATP</name>
        <dbReference type="ChEBI" id="CHEBI:30616"/>
    </ligand>
</feature>
<feature type="binding site" evidence="1">
    <location>
        <position position="296"/>
    </location>
    <ligand>
        <name>ATP</name>
        <dbReference type="ChEBI" id="CHEBI:30616"/>
    </ligand>
</feature>
<feature type="binding site" evidence="1">
    <location>
        <position position="327"/>
    </location>
    <ligand>
        <name>ATP</name>
        <dbReference type="ChEBI" id="CHEBI:30616"/>
    </ligand>
</feature>
<feature type="binding site" evidence="1">
    <location>
        <begin position="353"/>
        <end position="356"/>
    </location>
    <ligand>
        <name>ATP</name>
        <dbReference type="ChEBI" id="CHEBI:30616"/>
    </ligand>
</feature>
<name>PGK_CLOBA</name>
<comment type="catalytic activity">
    <reaction evidence="1">
        <text>(2R)-3-phosphoglycerate + ATP = (2R)-3-phospho-glyceroyl phosphate + ADP</text>
        <dbReference type="Rhea" id="RHEA:14801"/>
        <dbReference type="ChEBI" id="CHEBI:30616"/>
        <dbReference type="ChEBI" id="CHEBI:57604"/>
        <dbReference type="ChEBI" id="CHEBI:58272"/>
        <dbReference type="ChEBI" id="CHEBI:456216"/>
        <dbReference type="EC" id="2.7.2.3"/>
    </reaction>
</comment>
<comment type="pathway">
    <text evidence="1">Carbohydrate degradation; glycolysis; pyruvate from D-glyceraldehyde 3-phosphate: step 2/5.</text>
</comment>
<comment type="subunit">
    <text evidence="1">Monomer.</text>
</comment>
<comment type="subcellular location">
    <subcellularLocation>
        <location evidence="1">Cytoplasm</location>
    </subcellularLocation>
</comment>
<comment type="similarity">
    <text evidence="1">Belongs to the phosphoglycerate kinase family.</text>
</comment>
<gene>
    <name evidence="1" type="primary">pgk</name>
    <name type="ordered locus">CLH_2813</name>
</gene>
<organism>
    <name type="scientific">Clostridium botulinum (strain Alaska E43 / Type E3)</name>
    <dbReference type="NCBI Taxonomy" id="508767"/>
    <lineage>
        <taxon>Bacteria</taxon>
        <taxon>Bacillati</taxon>
        <taxon>Bacillota</taxon>
        <taxon>Clostridia</taxon>
        <taxon>Eubacteriales</taxon>
        <taxon>Clostridiaceae</taxon>
        <taxon>Clostridium</taxon>
    </lineage>
</organism>
<keyword id="KW-0067">ATP-binding</keyword>
<keyword id="KW-0963">Cytoplasm</keyword>
<keyword id="KW-0324">Glycolysis</keyword>
<keyword id="KW-0418">Kinase</keyword>
<keyword id="KW-0547">Nucleotide-binding</keyword>
<keyword id="KW-0808">Transferase</keyword>